<dbReference type="EC" id="2.5.1.79"/>
<dbReference type="EMBL" id="AF184094">
    <property type="protein sequence ID" value="AAF01312.1"/>
    <property type="molecule type" value="mRNA"/>
</dbReference>
<dbReference type="EMBL" id="AF184093">
    <property type="protein sequence ID" value="AAF01311.1"/>
    <property type="molecule type" value="Genomic_DNA"/>
</dbReference>
<dbReference type="EMBL" id="AB076723">
    <property type="protein sequence ID" value="BAB83633.1"/>
    <property type="molecule type" value="Genomic_DNA"/>
</dbReference>
<dbReference type="EMBL" id="AB076724">
    <property type="protein sequence ID" value="BAB83634.1"/>
    <property type="molecule type" value="Genomic_DNA"/>
</dbReference>
<dbReference type="EMBL" id="AB076725">
    <property type="protein sequence ID" value="BAB83635.1"/>
    <property type="molecule type" value="Genomic_DNA"/>
</dbReference>
<dbReference type="EMBL" id="AB076726">
    <property type="protein sequence ID" value="BAB83636.1"/>
    <property type="molecule type" value="Genomic_DNA"/>
</dbReference>
<dbReference type="EMBL" id="AB076727">
    <property type="protein sequence ID" value="BAB83637.1"/>
    <property type="molecule type" value="Genomic_DNA"/>
</dbReference>
<dbReference type="EMBL" id="AB076728">
    <property type="protein sequence ID" value="BAB83638.1"/>
    <property type="molecule type" value="Genomic_DNA"/>
</dbReference>
<dbReference type="EMBL" id="AB076729">
    <property type="protein sequence ID" value="BAB83639.1"/>
    <property type="molecule type" value="Genomic_DNA"/>
</dbReference>
<dbReference type="EMBL" id="AB076730">
    <property type="protein sequence ID" value="BAB83640.1"/>
    <property type="molecule type" value="Genomic_DNA"/>
</dbReference>
<dbReference type="EMBL" id="AB076731">
    <property type="protein sequence ID" value="BAB83641.1"/>
    <property type="molecule type" value="Genomic_DNA"/>
</dbReference>
<dbReference type="EMBL" id="AB076732">
    <property type="protein sequence ID" value="BAB83642.1"/>
    <property type="molecule type" value="Genomic_DNA"/>
</dbReference>
<dbReference type="EMBL" id="AB076733">
    <property type="protein sequence ID" value="BAB83643.1"/>
    <property type="molecule type" value="Genomic_DNA"/>
</dbReference>
<dbReference type="EMBL" id="AB076734">
    <property type="protein sequence ID" value="BAB83644.1"/>
    <property type="molecule type" value="Genomic_DNA"/>
</dbReference>
<dbReference type="EMBL" id="AB076735">
    <property type="protein sequence ID" value="BAB83645.1"/>
    <property type="molecule type" value="Genomic_DNA"/>
</dbReference>
<dbReference type="EMBL" id="AB076736">
    <property type="protein sequence ID" value="BAB83646.1"/>
    <property type="molecule type" value="Genomic_DNA"/>
</dbReference>
<dbReference type="EMBL" id="AB076737">
    <property type="protein sequence ID" value="BAB83647.1"/>
    <property type="molecule type" value="Genomic_DNA"/>
</dbReference>
<dbReference type="EMBL" id="AB076739">
    <property type="protein sequence ID" value="BAB83649.1"/>
    <property type="molecule type" value="Genomic_DNA"/>
</dbReference>
<dbReference type="EMBL" id="AB076740">
    <property type="protein sequence ID" value="BAB83650.1"/>
    <property type="molecule type" value="Genomic_DNA"/>
</dbReference>
<dbReference type="EMBL" id="AB076741">
    <property type="protein sequence ID" value="BAB83651.1"/>
    <property type="molecule type" value="Genomic_DNA"/>
</dbReference>
<dbReference type="EMBL" id="AB076742">
    <property type="protein sequence ID" value="BAB83652.1"/>
    <property type="molecule type" value="Genomic_DNA"/>
</dbReference>
<dbReference type="EMBL" id="AB076743">
    <property type="protein sequence ID" value="BAB83653.1"/>
    <property type="molecule type" value="Genomic_DNA"/>
</dbReference>
<dbReference type="EMBL" id="AB076738">
    <property type="protein sequence ID" value="BAB83648.1"/>
    <property type="molecule type" value="Genomic_DNA"/>
</dbReference>
<dbReference type="EMBL" id="AF296830">
    <property type="status" value="NOT_ANNOTATED_CDS"/>
    <property type="molecule type" value="Genomic_DNA"/>
</dbReference>
<dbReference type="EMBL" id="CP002688">
    <property type="protein sequence ID" value="AED92721.1"/>
    <property type="molecule type" value="Genomic_DNA"/>
</dbReference>
<dbReference type="EMBL" id="CP002688">
    <property type="protein sequence ID" value="AED92722.1"/>
    <property type="molecule type" value="Genomic_DNA"/>
</dbReference>
<dbReference type="EMBL" id="AY127003">
    <property type="protein sequence ID" value="AAM83230.1"/>
    <property type="molecule type" value="mRNA"/>
</dbReference>
<dbReference type="EMBL" id="BT002254">
    <property type="protein sequence ID" value="AAN72265.1"/>
    <property type="molecule type" value="mRNA"/>
</dbReference>
<dbReference type="EMBL" id="AY087927">
    <property type="protein sequence ID" value="AAM65477.1"/>
    <property type="molecule type" value="mRNA"/>
</dbReference>
<dbReference type="EMBL" id="AK318985">
    <property type="protein sequence ID" value="BAH57100.1"/>
    <property type="molecule type" value="mRNA"/>
</dbReference>
<dbReference type="RefSeq" id="NP_001078605.1">
    <molecule id="Q9S7X6-2"/>
    <property type="nucleotide sequence ID" value="NM_001085136.1"/>
</dbReference>
<dbReference type="RefSeq" id="NP_568376.1">
    <molecule id="Q9S7X6-1"/>
    <property type="nucleotide sequence ID" value="NM_121958.4"/>
</dbReference>
<dbReference type="SMR" id="Q9S7X6"/>
<dbReference type="FunCoup" id="Q9S7X6">
    <property type="interactions" value="4"/>
</dbReference>
<dbReference type="IntAct" id="Q9S7X6">
    <property type="interactions" value="1"/>
</dbReference>
<dbReference type="STRING" id="3702.Q9S7X6"/>
<dbReference type="iPTMnet" id="Q9S7X6"/>
<dbReference type="PaxDb" id="3702-AT5G19530.1"/>
<dbReference type="ProteomicsDB" id="244691">
    <molecule id="Q9S7X6-1"/>
</dbReference>
<dbReference type="EnsemblPlants" id="AT5G19530.1">
    <molecule id="Q9S7X6-1"/>
    <property type="protein sequence ID" value="AT5G19530.1"/>
    <property type="gene ID" value="AT5G19530"/>
</dbReference>
<dbReference type="EnsemblPlants" id="AT5G19530.2">
    <molecule id="Q9S7X6-2"/>
    <property type="protein sequence ID" value="AT5G19530.2"/>
    <property type="gene ID" value="AT5G19530"/>
</dbReference>
<dbReference type="GeneID" id="832073"/>
<dbReference type="Gramene" id="AT5G19530.1">
    <molecule id="Q9S7X6-1"/>
    <property type="protein sequence ID" value="AT5G19530.1"/>
    <property type="gene ID" value="AT5G19530"/>
</dbReference>
<dbReference type="Gramene" id="AT5G19530.2">
    <molecule id="Q9S7X6-2"/>
    <property type="protein sequence ID" value="AT5G19530.2"/>
    <property type="gene ID" value="AT5G19530"/>
</dbReference>
<dbReference type="KEGG" id="ath:AT5G19530"/>
<dbReference type="Araport" id="AT5G19530"/>
<dbReference type="TAIR" id="AT5G19530">
    <property type="gene designation" value="ACL5"/>
</dbReference>
<dbReference type="eggNOG" id="KOG1562">
    <property type="taxonomic scope" value="Eukaryota"/>
</dbReference>
<dbReference type="InParanoid" id="Q9S7X6"/>
<dbReference type="OMA" id="WIPSFGY"/>
<dbReference type="PhylomeDB" id="Q9S7X6"/>
<dbReference type="BioCyc" id="MetaCyc:MONOMER-15365"/>
<dbReference type="BRENDA" id="2.5.1.79">
    <property type="organism ID" value="399"/>
</dbReference>
<dbReference type="PRO" id="PR:Q9S7X6"/>
<dbReference type="Proteomes" id="UP000006548">
    <property type="component" value="Chromosome 5"/>
</dbReference>
<dbReference type="ExpressionAtlas" id="Q9S7X6">
    <property type="expression patterns" value="baseline and differential"/>
</dbReference>
<dbReference type="GO" id="GO:0005737">
    <property type="term" value="C:cytoplasm"/>
    <property type="evidence" value="ECO:0000304"/>
    <property type="project" value="TAIR"/>
</dbReference>
<dbReference type="GO" id="GO:0016768">
    <property type="term" value="F:spermine synthase activity"/>
    <property type="evidence" value="ECO:0000314"/>
    <property type="project" value="TAIR"/>
</dbReference>
<dbReference type="GO" id="GO:0010487">
    <property type="term" value="F:thermospermine synthase activity"/>
    <property type="evidence" value="ECO:0000314"/>
    <property type="project" value="TAIR"/>
</dbReference>
<dbReference type="GO" id="GO:0009926">
    <property type="term" value="P:auxin polar transport"/>
    <property type="evidence" value="ECO:0000315"/>
    <property type="project" value="TAIR"/>
</dbReference>
<dbReference type="GO" id="GO:0010087">
    <property type="term" value="P:phloem or xylem histogenesis"/>
    <property type="evidence" value="ECO:0000315"/>
    <property type="project" value="TAIR"/>
</dbReference>
<dbReference type="GO" id="GO:0006596">
    <property type="term" value="P:polyamine biosynthetic process"/>
    <property type="evidence" value="ECO:0007669"/>
    <property type="project" value="UniProtKB-KW"/>
</dbReference>
<dbReference type="GO" id="GO:0048759">
    <property type="term" value="P:xylem vessel member cell differentiation"/>
    <property type="evidence" value="ECO:0000315"/>
    <property type="project" value="TAIR"/>
</dbReference>
<dbReference type="CDD" id="cd02440">
    <property type="entry name" value="AdoMet_MTases"/>
    <property type="match status" value="1"/>
</dbReference>
<dbReference type="FunFam" id="3.40.50.150:FF:000088">
    <property type="entry name" value="Polyamine aminopropyltransferase"/>
    <property type="match status" value="1"/>
</dbReference>
<dbReference type="FunFam" id="2.30.140.10:FF:000006">
    <property type="entry name" value="thermospermine synthase ACAULIS5"/>
    <property type="match status" value="1"/>
</dbReference>
<dbReference type="Gene3D" id="2.30.140.10">
    <property type="entry name" value="Spermidine synthase, tetramerisation domain"/>
    <property type="match status" value="1"/>
</dbReference>
<dbReference type="Gene3D" id="3.40.50.150">
    <property type="entry name" value="Vaccinia Virus protein VP39"/>
    <property type="match status" value="1"/>
</dbReference>
<dbReference type="HAMAP" id="MF_00198">
    <property type="entry name" value="Spermidine_synth"/>
    <property type="match status" value="1"/>
</dbReference>
<dbReference type="InterPro" id="IPR030374">
    <property type="entry name" value="PABS"/>
</dbReference>
<dbReference type="InterPro" id="IPR029063">
    <property type="entry name" value="SAM-dependent_MTases_sf"/>
</dbReference>
<dbReference type="InterPro" id="IPR001045">
    <property type="entry name" value="Spermi_synthase"/>
</dbReference>
<dbReference type="InterPro" id="IPR035246">
    <property type="entry name" value="Spermidine_synt_N"/>
</dbReference>
<dbReference type="InterPro" id="IPR037163">
    <property type="entry name" value="Spermidine_synt_N_sf"/>
</dbReference>
<dbReference type="NCBIfam" id="NF037959">
    <property type="entry name" value="MFS_SpdSyn"/>
    <property type="match status" value="1"/>
</dbReference>
<dbReference type="PANTHER" id="PTHR43317">
    <property type="entry name" value="THERMOSPERMINE SYNTHASE ACAULIS5"/>
    <property type="match status" value="1"/>
</dbReference>
<dbReference type="PANTHER" id="PTHR43317:SF1">
    <property type="entry name" value="THERMOSPERMINE SYNTHASE ACAULIS5"/>
    <property type="match status" value="1"/>
</dbReference>
<dbReference type="Pfam" id="PF17284">
    <property type="entry name" value="Spermine_synt_N"/>
    <property type="match status" value="1"/>
</dbReference>
<dbReference type="Pfam" id="PF01564">
    <property type="entry name" value="Spermine_synth"/>
    <property type="match status" value="1"/>
</dbReference>
<dbReference type="SUPFAM" id="SSF53335">
    <property type="entry name" value="S-adenosyl-L-methionine-dependent methyltransferases"/>
    <property type="match status" value="1"/>
</dbReference>
<dbReference type="PROSITE" id="PS51006">
    <property type="entry name" value="PABS_2"/>
    <property type="match status" value="1"/>
</dbReference>
<accession>Q9S7X6</accession>
<accession>A8MSC8</accession>
<accession>C0Z321</accession>
<accession>Q8VWK6</accession>
<accession>Q8W3K7</accession>
<accession>Q8W3K8</accession>
<accession>Q8W3K9</accession>
<name>ACL5_ARATH</name>
<protein>
    <recommendedName>
        <fullName>Thermospermine synthase ACAULIS5</fullName>
        <ecNumber>2.5.1.79</ecNumber>
    </recommendedName>
</protein>
<sequence>MGEAVEVMFGNGFPEIHKATSPTQTLHSNQQDCHWYEETIDDDLKWSFALNSVLHQGTSEYQDIALLDTKRFGKVLVIDGKMQSAERDEFIYHECLIHPALLFHPNPKTVFIMGGGEGSAAREILKHTTIEKVVMCDIDQEVVDFCRRFLTVNSDAFCNKKLELVIKDAKAELEKREEKFDIIVGDLADPVEGGPCYQLYTKSFYQNILKPKLSPNGIFVTQAGPAGIFTHKEVFTSIYNTMKQVFKYVKAYTAHVPSFADTWGWVMASDHEFDVEVDEMDRRIEERVNGELMYLNAPSFVSAATLNKTISLALEKETEVYSEENARFIHGHGVAYRHI</sequence>
<organism>
    <name type="scientific">Arabidopsis thaliana</name>
    <name type="common">Mouse-ear cress</name>
    <dbReference type="NCBI Taxonomy" id="3702"/>
    <lineage>
        <taxon>Eukaryota</taxon>
        <taxon>Viridiplantae</taxon>
        <taxon>Streptophyta</taxon>
        <taxon>Embryophyta</taxon>
        <taxon>Tracheophyta</taxon>
        <taxon>Spermatophyta</taxon>
        <taxon>Magnoliopsida</taxon>
        <taxon>eudicotyledons</taxon>
        <taxon>Gunneridae</taxon>
        <taxon>Pentapetalae</taxon>
        <taxon>rosids</taxon>
        <taxon>malvids</taxon>
        <taxon>Brassicales</taxon>
        <taxon>Brassicaceae</taxon>
        <taxon>Camelineae</taxon>
        <taxon>Arabidopsis</taxon>
    </lineage>
</organism>
<evidence type="ECO:0000250" key="1"/>
<evidence type="ECO:0000269" key="2">
    <source>
    </source>
</evidence>
<evidence type="ECO:0000269" key="3">
    <source>
    </source>
</evidence>
<evidence type="ECO:0000269" key="4">
    <source>
    </source>
</evidence>
<evidence type="ECO:0000269" key="5">
    <source>
    </source>
</evidence>
<evidence type="ECO:0000269" key="6">
    <source>
    </source>
</evidence>
<evidence type="ECO:0000269" key="7">
    <source>
    </source>
</evidence>
<evidence type="ECO:0000303" key="8">
    <source>
    </source>
</evidence>
<evidence type="ECO:0000305" key="9"/>
<reference key="1">
    <citation type="journal article" date="2000" name="EMBO J.">
        <title>ACAULIS5, an Arabidopsis gene required for stem elongation, encodes a spermine synthase.</title>
        <authorList>
            <person name="Hanzawa Y."/>
            <person name="Takahashi T."/>
            <person name="Michael A.J."/>
            <person name="Burtin D."/>
            <person name="Long D."/>
            <person name="Pineiro M."/>
            <person name="Coupland G."/>
            <person name="Komeda Y."/>
        </authorList>
    </citation>
    <scope>NUCLEOTIDE SEQUENCE [GENOMIC DNA / MRNA] (ISOFORM 1)</scope>
    <scope>MUTAGENESIS OF GLU-123</scope>
    <scope>FUNCTION</scope>
    <scope>TISSUE SPECIFICITY</scope>
    <scope>INDUCTION</scope>
    <source>
        <strain>cv. Columbia</strain>
    </source>
</reference>
<reference key="2">
    <citation type="journal article" date="2003" name="Genes Genet. Syst.">
        <title>DNA polymorphism at the ACAULIS5 locus of the wild plant Arabidopsis thaliana.</title>
        <authorList>
            <person name="Yoshida K."/>
            <person name="Kamiya T."/>
            <person name="Kawabe A."/>
            <person name="Miyashita N.T."/>
        </authorList>
    </citation>
    <scope>NUCLEOTIDE SEQUENCE [GENOMIC DNA]</scope>
    <source>
        <strain>cv. Ag-0</strain>
        <strain>cv. Bl-1</strain>
        <strain>cv. Bus-1</strain>
        <strain>cv. Ci-0</strain>
        <strain>cv. Cvi-0</strain>
        <strain>cv. Dra-0</strain>
        <strain>cv. Edi-0</strain>
        <strain>cv. Hau-0</strain>
        <strain>cv. In-0</strain>
        <strain>cv. Ita-0</strain>
        <strain>cv. Kas-1</strain>
        <strain>cv. Mr-0</strain>
        <strain>cv. Nok-4</strain>
        <strain>cv. Ost-0</strain>
        <strain>cv. Pog-0</strain>
        <strain>cv. Rou-0</strain>
        <strain>cv. Shokei</strain>
        <strain>cv. Su-0</strain>
        <strain>cv. Ts-1</strain>
        <strain>cv. Wassilewskija</strain>
    </source>
</reference>
<reference key="3">
    <citation type="journal article" date="2000" name="Nature">
        <title>Sequence and analysis of chromosome 5 of the plant Arabidopsis thaliana.</title>
        <authorList>
            <person name="Tabata S."/>
            <person name="Kaneko T."/>
            <person name="Nakamura Y."/>
            <person name="Kotani H."/>
            <person name="Kato T."/>
            <person name="Asamizu E."/>
            <person name="Miyajima N."/>
            <person name="Sasamoto S."/>
            <person name="Kimura T."/>
            <person name="Hosouchi T."/>
            <person name="Kawashima K."/>
            <person name="Kohara M."/>
            <person name="Matsumoto M."/>
            <person name="Matsuno A."/>
            <person name="Muraki A."/>
            <person name="Nakayama S."/>
            <person name="Nakazaki N."/>
            <person name="Naruo K."/>
            <person name="Okumura S."/>
            <person name="Shinpo S."/>
            <person name="Takeuchi C."/>
            <person name="Wada T."/>
            <person name="Watanabe A."/>
            <person name="Yamada M."/>
            <person name="Yasuda M."/>
            <person name="Sato S."/>
            <person name="de la Bastide M."/>
            <person name="Huang E."/>
            <person name="Spiegel L."/>
            <person name="Gnoj L."/>
            <person name="O'Shaughnessy A."/>
            <person name="Preston R."/>
            <person name="Habermann K."/>
            <person name="Murray J."/>
            <person name="Johnson D."/>
            <person name="Rohlfing T."/>
            <person name="Nelson J."/>
            <person name="Stoneking T."/>
            <person name="Pepin K."/>
            <person name="Spieth J."/>
            <person name="Sekhon M."/>
            <person name="Armstrong J."/>
            <person name="Becker M."/>
            <person name="Belter E."/>
            <person name="Cordum H."/>
            <person name="Cordes M."/>
            <person name="Courtney L."/>
            <person name="Courtney W."/>
            <person name="Dante M."/>
            <person name="Du H."/>
            <person name="Edwards J."/>
            <person name="Fryman J."/>
            <person name="Haakensen B."/>
            <person name="Lamar E."/>
            <person name="Latreille P."/>
            <person name="Leonard S."/>
            <person name="Meyer R."/>
            <person name="Mulvaney E."/>
            <person name="Ozersky P."/>
            <person name="Riley A."/>
            <person name="Strowmatt C."/>
            <person name="Wagner-McPherson C."/>
            <person name="Wollam A."/>
            <person name="Yoakum M."/>
            <person name="Bell M."/>
            <person name="Dedhia N."/>
            <person name="Parnell L."/>
            <person name="Shah R."/>
            <person name="Rodriguez M."/>
            <person name="Hoon See L."/>
            <person name="Vil D."/>
            <person name="Baker J."/>
            <person name="Kirchoff K."/>
            <person name="Toth K."/>
            <person name="King L."/>
            <person name="Bahret A."/>
            <person name="Miller B."/>
            <person name="Marra M.A."/>
            <person name="Martienssen R."/>
            <person name="McCombie W.R."/>
            <person name="Wilson R.K."/>
            <person name="Murphy G."/>
            <person name="Bancroft I."/>
            <person name="Volckaert G."/>
            <person name="Wambutt R."/>
            <person name="Duesterhoeft A."/>
            <person name="Stiekema W."/>
            <person name="Pohl T."/>
            <person name="Entian K.-D."/>
            <person name="Terryn N."/>
            <person name="Hartley N."/>
            <person name="Bent E."/>
            <person name="Johnson S."/>
            <person name="Langham S.-A."/>
            <person name="McCullagh B."/>
            <person name="Robben J."/>
            <person name="Grymonprez B."/>
            <person name="Zimmermann W."/>
            <person name="Ramsperger U."/>
            <person name="Wedler H."/>
            <person name="Balke K."/>
            <person name="Wedler E."/>
            <person name="Peters S."/>
            <person name="van Staveren M."/>
            <person name="Dirkse W."/>
            <person name="Mooijman P."/>
            <person name="Klein Lankhorst R."/>
            <person name="Weitzenegger T."/>
            <person name="Bothe G."/>
            <person name="Rose M."/>
            <person name="Hauf J."/>
            <person name="Berneiser S."/>
            <person name="Hempel S."/>
            <person name="Feldpausch M."/>
            <person name="Lamberth S."/>
            <person name="Villarroel R."/>
            <person name="Gielen J."/>
            <person name="Ardiles W."/>
            <person name="Bents O."/>
            <person name="Lemcke K."/>
            <person name="Kolesov G."/>
            <person name="Mayer K.F.X."/>
            <person name="Rudd S."/>
            <person name="Schoof H."/>
            <person name="Schueller C."/>
            <person name="Zaccaria P."/>
            <person name="Mewes H.-W."/>
            <person name="Bevan M."/>
            <person name="Fransz P.F."/>
        </authorList>
    </citation>
    <scope>NUCLEOTIDE SEQUENCE [LARGE SCALE GENOMIC DNA]</scope>
    <source>
        <strain>cv. Columbia</strain>
    </source>
</reference>
<reference key="4">
    <citation type="journal article" date="2017" name="Plant J.">
        <title>Araport11: a complete reannotation of the Arabidopsis thaliana reference genome.</title>
        <authorList>
            <person name="Cheng C.Y."/>
            <person name="Krishnakumar V."/>
            <person name="Chan A.P."/>
            <person name="Thibaud-Nissen F."/>
            <person name="Schobel S."/>
            <person name="Town C.D."/>
        </authorList>
    </citation>
    <scope>GENOME REANNOTATION</scope>
    <source>
        <strain>cv. Columbia</strain>
    </source>
</reference>
<reference key="5">
    <citation type="journal article" date="2003" name="Science">
        <title>Empirical analysis of transcriptional activity in the Arabidopsis genome.</title>
        <authorList>
            <person name="Yamada K."/>
            <person name="Lim J."/>
            <person name="Dale J.M."/>
            <person name="Chen H."/>
            <person name="Shinn P."/>
            <person name="Palm C.J."/>
            <person name="Southwick A.M."/>
            <person name="Wu H.C."/>
            <person name="Kim C.J."/>
            <person name="Nguyen M."/>
            <person name="Pham P.K."/>
            <person name="Cheuk R.F."/>
            <person name="Karlin-Newmann G."/>
            <person name="Liu S.X."/>
            <person name="Lam B."/>
            <person name="Sakano H."/>
            <person name="Wu T."/>
            <person name="Yu G."/>
            <person name="Miranda M."/>
            <person name="Quach H.L."/>
            <person name="Tripp M."/>
            <person name="Chang C.H."/>
            <person name="Lee J.M."/>
            <person name="Toriumi M.J."/>
            <person name="Chan M.M."/>
            <person name="Tang C.C."/>
            <person name="Onodera C.S."/>
            <person name="Deng J.M."/>
            <person name="Akiyama K."/>
            <person name="Ansari Y."/>
            <person name="Arakawa T."/>
            <person name="Banh J."/>
            <person name="Banno F."/>
            <person name="Bowser L."/>
            <person name="Brooks S.Y."/>
            <person name="Carninci P."/>
            <person name="Chao Q."/>
            <person name="Choy N."/>
            <person name="Enju A."/>
            <person name="Goldsmith A.D."/>
            <person name="Gurjal M."/>
            <person name="Hansen N.F."/>
            <person name="Hayashizaki Y."/>
            <person name="Johnson-Hopson C."/>
            <person name="Hsuan V.W."/>
            <person name="Iida K."/>
            <person name="Karnes M."/>
            <person name="Khan S."/>
            <person name="Koesema E."/>
            <person name="Ishida J."/>
            <person name="Jiang P.X."/>
            <person name="Jones T."/>
            <person name="Kawai J."/>
            <person name="Kamiya A."/>
            <person name="Meyers C."/>
            <person name="Nakajima M."/>
            <person name="Narusaka M."/>
            <person name="Seki M."/>
            <person name="Sakurai T."/>
            <person name="Satou M."/>
            <person name="Tamse R."/>
            <person name="Vaysberg M."/>
            <person name="Wallender E.K."/>
            <person name="Wong C."/>
            <person name="Yamamura Y."/>
            <person name="Yuan S."/>
            <person name="Shinozaki K."/>
            <person name="Davis R.W."/>
            <person name="Theologis A."/>
            <person name="Ecker J.R."/>
        </authorList>
    </citation>
    <scope>NUCLEOTIDE SEQUENCE [LARGE SCALE MRNA] (ISOFORM 1)</scope>
    <source>
        <strain>cv. Columbia</strain>
    </source>
</reference>
<reference key="6">
    <citation type="submission" date="2002-03" db="EMBL/GenBank/DDBJ databases">
        <title>Full-length cDNA from Arabidopsis thaliana.</title>
        <authorList>
            <person name="Brover V.V."/>
            <person name="Troukhan M.E."/>
            <person name="Alexandrov N.A."/>
            <person name="Lu Y.-P."/>
            <person name="Flavell R.B."/>
            <person name="Feldmann K.A."/>
        </authorList>
    </citation>
    <scope>NUCLEOTIDE SEQUENCE [LARGE SCALE MRNA] (ISOFORM 1)</scope>
</reference>
<reference key="7">
    <citation type="journal article" date="2009" name="DNA Res.">
        <title>Analysis of multiple occurrences of alternative splicing events in Arabidopsis thaliana using novel sequenced full-length cDNAs.</title>
        <authorList>
            <person name="Iida K."/>
            <person name="Fukami-Kobayashi K."/>
            <person name="Toyoda A."/>
            <person name="Sakaki Y."/>
            <person name="Kobayashi M."/>
            <person name="Seki M."/>
            <person name="Shinozaki K."/>
        </authorList>
    </citation>
    <scope>NUCLEOTIDE SEQUENCE [LARGE SCALE MRNA] (ISOFORM 3)</scope>
    <source>
        <strain>cv. Columbia</strain>
    </source>
</reference>
<reference key="8">
    <citation type="journal article" date="2005" name="Plant Physiol.">
        <title>Arabidopsis thickvein mutation affects vein thickness and organ vascularization, and resides in a provascular cell-specific spermine synthase involved in vein definition and in polar auxin transport.</title>
        <authorList>
            <person name="Clay N.K."/>
            <person name="Nelson T."/>
        </authorList>
    </citation>
    <scope>TISSUE SPECIFICITY</scope>
    <scope>DEVELOPMENTAL STAGE</scope>
    <scope>DISRUPTION PHENOTYPE</scope>
</reference>
<reference key="9">
    <citation type="journal article" date="2007" name="FEBS Lett.">
        <title>Putative spermine synthases from Thalassiosira pseudonana and Arabidopsis thaliana synthesize thermospermine rather than spermine.</title>
        <authorList>
            <person name="Knott J.M."/>
            <person name="Romer P."/>
            <person name="Sumper M."/>
        </authorList>
    </citation>
    <scope>FUNCTION</scope>
    <scope>CATALYTIC ACTIVITY</scope>
</reference>
<reference key="10">
    <citation type="journal article" date="2008" name="Development">
        <title>ACAULIS5 controls Arabidopsis xylem specification through the prevention of premature cell death.</title>
        <authorList>
            <person name="Muniz L."/>
            <person name="Minguet E.G."/>
            <person name="Singh S.K."/>
            <person name="Pesquet E."/>
            <person name="Vera-Sirera F."/>
            <person name="Moreau-Courtois C.L."/>
            <person name="Carbonell J."/>
            <person name="Blazquez M.A."/>
            <person name="Tuominen H."/>
        </authorList>
    </citation>
    <scope>FUNCTION</scope>
    <scope>DISRUPTION PHENOTYPE</scope>
</reference>
<reference key="11">
    <citation type="journal article" date="2008" name="Plant Cell Physiol.">
        <title>Thermospermine is required for stem elongation in Arabidopsis thaliana.</title>
        <authorList>
            <person name="Kakehi J."/>
            <person name="Kuwashiro Y."/>
            <person name="Niitsu M."/>
            <person name="Takahashi T."/>
        </authorList>
    </citation>
    <scope>FUNCTION</scope>
    <scope>INDUCTION BY THERMOSPERMINE</scope>
</reference>
<reference key="12">
    <citation type="journal article" date="2010" name="Plant Physiol. Biochem.">
        <title>Quantitative analysis of plant polyamines including thermospermine during growth and salinity stress.</title>
        <authorList>
            <person name="Naka Y."/>
            <person name="Watanabe K."/>
            <person name="Sagor G.H."/>
            <person name="Niitsu M."/>
            <person name="Pillai M.A."/>
            <person name="Kusano T."/>
            <person name="Takahashi Y."/>
        </authorList>
    </citation>
    <scope>INDUCTION BY SALT</scope>
</reference>
<gene>
    <name type="primary">ACL5</name>
    <name type="synonym">TKV</name>
    <name type="ordered locus">At5g19530</name>
    <name type="ORF">T20D1.50</name>
</gene>
<proteinExistence type="evidence at protein level"/>
<comment type="function">
    <text evidence="2 4 5 6">Required for correct xylem specification through regulation of the lifetime of the xylem elements. Prevents premature death of the xylem vessel elements.</text>
</comment>
<comment type="catalytic activity">
    <reaction evidence="4">
        <text>S-adenosyl 3-(methylsulfanyl)propylamine + spermidine = thermospermine + S-methyl-5'-thioadenosine + H(+)</text>
        <dbReference type="Rhea" id="RHEA:30515"/>
        <dbReference type="ChEBI" id="CHEBI:15378"/>
        <dbReference type="ChEBI" id="CHEBI:17509"/>
        <dbReference type="ChEBI" id="CHEBI:57443"/>
        <dbReference type="ChEBI" id="CHEBI:57834"/>
        <dbReference type="ChEBI" id="CHEBI:59903"/>
        <dbReference type="EC" id="2.5.1.79"/>
    </reaction>
</comment>
<comment type="alternative products">
    <event type="alternative splicing"/>
    <isoform>
        <id>Q9S7X6-1</id>
        <name>1</name>
        <sequence type="displayed"/>
    </isoform>
    <isoform>
        <id>Q9S7X6-2</id>
        <name>2</name>
        <sequence type="described" ref="VSP_039690"/>
    </isoform>
    <isoform>
        <id>Q9S7X6-3</id>
        <name>3</name>
        <sequence type="described" ref="VSP_039689"/>
    </isoform>
</comment>
<comment type="tissue specificity">
    <text evidence="2 3">Highly expressed in stem internodes and roots. Lower levels in young seedlings before flowering and rosette leaves. Expressed in the vascular tissues. Restricted to procambial and/or provascular cells during primary root development and early leaves development.</text>
</comment>
<comment type="developmental stage">
    <text evidence="3">Expressed throughout early globular-staged embryos and during embryogenesis.</text>
</comment>
<comment type="induction">
    <text evidence="2 6 7">Up-regulated by auxin (IAA), but not by abscisic acid (ABA), brassinolid (BR), gibberelic acid (GA3)or benzyl aminopurine (BA). Down-regulated by salt stress and thermospermine.</text>
</comment>
<comment type="disruption phenotype">
    <text evidence="3 5">Severe reduction in the length of stem internodes. Increased thickness of veins in leaves and inflorescence stems. Altered morphology of xylem vessel elements.</text>
</comment>
<comment type="similarity">
    <text evidence="9">Belongs to the spermidine/spermine synthase family.</text>
</comment>
<keyword id="KW-0025">Alternative splicing</keyword>
<keyword id="KW-0620">Polyamine biosynthesis</keyword>
<keyword id="KW-1185">Reference proteome</keyword>
<keyword id="KW-0808">Transferase</keyword>
<feature type="chain" id="PRO_0000397674" description="Thermospermine synthase ACAULIS5">
    <location>
        <begin position="1"/>
        <end position="339"/>
    </location>
</feature>
<feature type="domain" description="PABS">
    <location>
        <begin position="33"/>
        <end position="270"/>
    </location>
</feature>
<feature type="active site" description="Proton acceptor" evidence="1">
    <location>
        <position position="186"/>
    </location>
</feature>
<feature type="binding site" evidence="1">
    <location>
        <position position="62"/>
    </location>
    <ligand>
        <name>S-adenosyl 3-(methylsulfanyl)propylamine</name>
        <dbReference type="ChEBI" id="CHEBI:57443"/>
    </ligand>
</feature>
<feature type="binding site" evidence="1">
    <location>
        <position position="117"/>
    </location>
    <ligand>
        <name>S-adenosyl 3-(methylsulfanyl)propylamine</name>
        <dbReference type="ChEBI" id="CHEBI:57443"/>
    </ligand>
</feature>
<feature type="binding site" evidence="1">
    <location>
        <position position="137"/>
    </location>
    <ligand>
        <name>S-adenosyl 3-(methylsulfanyl)propylamine</name>
        <dbReference type="ChEBI" id="CHEBI:57443"/>
    </ligand>
</feature>
<feature type="binding site" evidence="1">
    <location>
        <begin position="168"/>
        <end position="169"/>
    </location>
    <ligand>
        <name>S-adenosyl 3-(methylsulfanyl)propylamine</name>
        <dbReference type="ChEBI" id="CHEBI:57443"/>
    </ligand>
</feature>
<feature type="splice variant" id="VSP_039689" description="In isoform 3." evidence="8">
    <location>
        <begin position="1"/>
        <end position="81"/>
    </location>
</feature>
<feature type="splice variant" id="VSP_039690" description="In isoform 2." evidence="9">
    <location>
        <begin position="1"/>
        <end position="7"/>
    </location>
</feature>
<feature type="sequence variant" description="In strain: cv. Bus-1, cv. Ci-0, cv. Cvi-0, cv. Edi-0, cv. Kas-1 and cv. Ost-0.">
    <original>H</original>
    <variation>L</variation>
    <location>
        <position position="17"/>
    </location>
</feature>
<feature type="sequence variant" description="In strain: cv. Pog-0.">
    <original>D</original>
    <variation>N</variation>
    <location>
        <position position="63"/>
    </location>
</feature>
<feature type="sequence variant" description="In strain: cv. Bl-1.">
    <original>N</original>
    <variation>S</variation>
    <location>
        <position position="240"/>
    </location>
</feature>
<feature type="sequence variant" description="In strain: cv. Edi-0.">
    <original>F</original>
    <variation>L</variation>
    <location>
        <position position="259"/>
    </location>
</feature>
<feature type="mutagenesis site" description="In acl5-1; loss of function." evidence="2">
    <original>E</original>
    <variation>K</variation>
    <location>
        <position position="123"/>
    </location>
</feature>